<name>RIMM_PSEFS</name>
<accession>C3K1H0</accession>
<feature type="chain" id="PRO_1000201811" description="Ribosome maturation factor RimM">
    <location>
        <begin position="1"/>
        <end position="178"/>
    </location>
</feature>
<feature type="domain" description="PRC barrel" evidence="1">
    <location>
        <begin position="100"/>
        <end position="178"/>
    </location>
</feature>
<dbReference type="EMBL" id="AM181176">
    <property type="protein sequence ID" value="CAY51980.1"/>
    <property type="molecule type" value="Genomic_DNA"/>
</dbReference>
<dbReference type="RefSeq" id="WP_015885699.1">
    <property type="nucleotide sequence ID" value="NC_012660.1"/>
</dbReference>
<dbReference type="SMR" id="C3K1H0"/>
<dbReference type="STRING" id="294.SRM1_01075"/>
<dbReference type="GeneID" id="93466625"/>
<dbReference type="eggNOG" id="COG0806">
    <property type="taxonomic scope" value="Bacteria"/>
</dbReference>
<dbReference type="HOGENOM" id="CLU_077636_1_0_6"/>
<dbReference type="OrthoDB" id="9783509at2"/>
<dbReference type="GO" id="GO:0005737">
    <property type="term" value="C:cytoplasm"/>
    <property type="evidence" value="ECO:0007669"/>
    <property type="project" value="UniProtKB-SubCell"/>
</dbReference>
<dbReference type="GO" id="GO:0005840">
    <property type="term" value="C:ribosome"/>
    <property type="evidence" value="ECO:0007669"/>
    <property type="project" value="InterPro"/>
</dbReference>
<dbReference type="GO" id="GO:0043022">
    <property type="term" value="F:ribosome binding"/>
    <property type="evidence" value="ECO:0007669"/>
    <property type="project" value="InterPro"/>
</dbReference>
<dbReference type="GO" id="GO:0042274">
    <property type="term" value="P:ribosomal small subunit biogenesis"/>
    <property type="evidence" value="ECO:0007669"/>
    <property type="project" value="UniProtKB-UniRule"/>
</dbReference>
<dbReference type="GO" id="GO:0006364">
    <property type="term" value="P:rRNA processing"/>
    <property type="evidence" value="ECO:0007669"/>
    <property type="project" value="UniProtKB-UniRule"/>
</dbReference>
<dbReference type="Gene3D" id="2.30.30.240">
    <property type="entry name" value="PRC-barrel domain"/>
    <property type="match status" value="1"/>
</dbReference>
<dbReference type="Gene3D" id="2.40.30.60">
    <property type="entry name" value="RimM"/>
    <property type="match status" value="1"/>
</dbReference>
<dbReference type="HAMAP" id="MF_00014">
    <property type="entry name" value="Ribosome_mat_RimM"/>
    <property type="match status" value="1"/>
</dbReference>
<dbReference type="InterPro" id="IPR011033">
    <property type="entry name" value="PRC_barrel-like_sf"/>
</dbReference>
<dbReference type="InterPro" id="IPR056792">
    <property type="entry name" value="PRC_RimM"/>
</dbReference>
<dbReference type="InterPro" id="IPR011961">
    <property type="entry name" value="RimM"/>
</dbReference>
<dbReference type="InterPro" id="IPR002676">
    <property type="entry name" value="RimM_N"/>
</dbReference>
<dbReference type="InterPro" id="IPR036976">
    <property type="entry name" value="RimM_N_sf"/>
</dbReference>
<dbReference type="InterPro" id="IPR009000">
    <property type="entry name" value="Transl_B-barrel_sf"/>
</dbReference>
<dbReference type="NCBIfam" id="TIGR02273">
    <property type="entry name" value="16S_RimM"/>
    <property type="match status" value="1"/>
</dbReference>
<dbReference type="PANTHER" id="PTHR33692">
    <property type="entry name" value="RIBOSOME MATURATION FACTOR RIMM"/>
    <property type="match status" value="1"/>
</dbReference>
<dbReference type="PANTHER" id="PTHR33692:SF1">
    <property type="entry name" value="RIBOSOME MATURATION FACTOR RIMM"/>
    <property type="match status" value="1"/>
</dbReference>
<dbReference type="Pfam" id="PF24986">
    <property type="entry name" value="PRC_RimM"/>
    <property type="match status" value="1"/>
</dbReference>
<dbReference type="Pfam" id="PF01782">
    <property type="entry name" value="RimM"/>
    <property type="match status" value="1"/>
</dbReference>
<dbReference type="SUPFAM" id="SSF50346">
    <property type="entry name" value="PRC-barrel domain"/>
    <property type="match status" value="1"/>
</dbReference>
<dbReference type="SUPFAM" id="SSF50447">
    <property type="entry name" value="Translation proteins"/>
    <property type="match status" value="1"/>
</dbReference>
<comment type="function">
    <text evidence="1">An accessory protein needed during the final step in the assembly of 30S ribosomal subunit, possibly for assembly of the head region. Essential for efficient processing of 16S rRNA. May be needed both before and after RbfA during the maturation of 16S rRNA. It has affinity for free ribosomal 30S subunits but not for 70S ribosomes.</text>
</comment>
<comment type="subunit">
    <text evidence="1">Binds ribosomal protein uS19.</text>
</comment>
<comment type="subcellular location">
    <subcellularLocation>
        <location evidence="1">Cytoplasm</location>
    </subcellularLocation>
</comment>
<comment type="domain">
    <text evidence="1">The PRC barrel domain binds ribosomal protein uS19.</text>
</comment>
<comment type="similarity">
    <text evidence="1">Belongs to the RimM family.</text>
</comment>
<protein>
    <recommendedName>
        <fullName evidence="1">Ribosome maturation factor RimM</fullName>
    </recommendedName>
</protein>
<gene>
    <name evidence="1" type="primary">rimM</name>
    <name type="ordered locus">PFLU_5011</name>
</gene>
<keyword id="KW-0143">Chaperone</keyword>
<keyword id="KW-0963">Cytoplasm</keyword>
<keyword id="KW-0690">Ribosome biogenesis</keyword>
<keyword id="KW-0698">rRNA processing</keyword>
<reference key="1">
    <citation type="journal article" date="2009" name="Genome Biol.">
        <title>Genomic and genetic analyses of diversity and plant interactions of Pseudomonas fluorescens.</title>
        <authorList>
            <person name="Silby M.W."/>
            <person name="Cerdeno-Tarraga A.M."/>
            <person name="Vernikos G.S."/>
            <person name="Giddens S.R."/>
            <person name="Jackson R.W."/>
            <person name="Preston G.M."/>
            <person name="Zhang X.-X."/>
            <person name="Moon C.D."/>
            <person name="Gehrig S.M."/>
            <person name="Godfrey S.A.C."/>
            <person name="Knight C.G."/>
            <person name="Malone J.G."/>
            <person name="Robinson Z."/>
            <person name="Spiers A.J."/>
            <person name="Harris S."/>
            <person name="Challis G.L."/>
            <person name="Yaxley A.M."/>
            <person name="Harris D."/>
            <person name="Seeger K."/>
            <person name="Murphy L."/>
            <person name="Rutter S."/>
            <person name="Squares R."/>
            <person name="Quail M.A."/>
            <person name="Saunders E."/>
            <person name="Mavromatis K."/>
            <person name="Brettin T.S."/>
            <person name="Bentley S.D."/>
            <person name="Hothersall J."/>
            <person name="Stephens E."/>
            <person name="Thomas C.M."/>
            <person name="Parkhill J."/>
            <person name="Levy S.B."/>
            <person name="Rainey P.B."/>
            <person name="Thomson N.R."/>
        </authorList>
    </citation>
    <scope>NUCLEOTIDE SEQUENCE [LARGE SCALE GENOMIC DNA]</scope>
    <source>
        <strain>SBW25</strain>
    </source>
</reference>
<sequence length="178" mass="20017">MNATPAVADDLIVIGKIYSVHGVRGEVKVYSFTDPTENLLQYKTWTLKREGSVKQVELVSGRGSDKFLVAKLKGLDDREEARLLAGYEICVPRNLFPELTDGEYYWYQLEGLKVIDQLGQLFGKIDHLLETGANDVMVVKPCAGSLDDRERLLPYTKQCVLAVDLEAGEMKVEWDADF</sequence>
<organism>
    <name type="scientific">Pseudomonas fluorescens (strain SBW25)</name>
    <dbReference type="NCBI Taxonomy" id="216595"/>
    <lineage>
        <taxon>Bacteria</taxon>
        <taxon>Pseudomonadati</taxon>
        <taxon>Pseudomonadota</taxon>
        <taxon>Gammaproteobacteria</taxon>
        <taxon>Pseudomonadales</taxon>
        <taxon>Pseudomonadaceae</taxon>
        <taxon>Pseudomonas</taxon>
    </lineage>
</organism>
<proteinExistence type="inferred from homology"/>
<evidence type="ECO:0000255" key="1">
    <source>
        <dbReference type="HAMAP-Rule" id="MF_00014"/>
    </source>
</evidence>